<name>MURD_GLOVI</name>
<organism>
    <name type="scientific">Gloeobacter violaceus (strain ATCC 29082 / PCC 7421)</name>
    <dbReference type="NCBI Taxonomy" id="251221"/>
    <lineage>
        <taxon>Bacteria</taxon>
        <taxon>Bacillati</taxon>
        <taxon>Cyanobacteriota</taxon>
        <taxon>Cyanophyceae</taxon>
        <taxon>Gloeobacterales</taxon>
        <taxon>Gloeobacteraceae</taxon>
        <taxon>Gloeobacter</taxon>
    </lineage>
</organism>
<keyword id="KW-0067">ATP-binding</keyword>
<keyword id="KW-0131">Cell cycle</keyword>
<keyword id="KW-0132">Cell division</keyword>
<keyword id="KW-0133">Cell shape</keyword>
<keyword id="KW-0961">Cell wall biogenesis/degradation</keyword>
<keyword id="KW-0963">Cytoplasm</keyword>
<keyword id="KW-0436">Ligase</keyword>
<keyword id="KW-0547">Nucleotide-binding</keyword>
<keyword id="KW-0573">Peptidoglycan synthesis</keyword>
<keyword id="KW-1185">Reference proteome</keyword>
<reference key="1">
    <citation type="journal article" date="2003" name="DNA Res.">
        <title>Complete genome structure of Gloeobacter violaceus PCC 7421, a cyanobacterium that lacks thylakoids.</title>
        <authorList>
            <person name="Nakamura Y."/>
            <person name="Kaneko T."/>
            <person name="Sato S."/>
            <person name="Mimuro M."/>
            <person name="Miyashita H."/>
            <person name="Tsuchiya T."/>
            <person name="Sasamoto S."/>
            <person name="Watanabe A."/>
            <person name="Kawashima K."/>
            <person name="Kishida Y."/>
            <person name="Kiyokawa C."/>
            <person name="Kohara M."/>
            <person name="Matsumoto M."/>
            <person name="Matsuno A."/>
            <person name="Nakazaki N."/>
            <person name="Shimpo S."/>
            <person name="Takeuchi C."/>
            <person name="Yamada M."/>
            <person name="Tabata S."/>
        </authorList>
    </citation>
    <scope>NUCLEOTIDE SEQUENCE [LARGE SCALE GENOMIC DNA]</scope>
    <source>
        <strain>ATCC 29082 / PCC 7421</strain>
    </source>
</reference>
<evidence type="ECO:0000255" key="1">
    <source>
        <dbReference type="HAMAP-Rule" id="MF_00639"/>
    </source>
</evidence>
<dbReference type="EC" id="6.3.2.9" evidence="1"/>
<dbReference type="EMBL" id="BA000045">
    <property type="protein sequence ID" value="BAC91673.1"/>
    <property type="molecule type" value="Genomic_DNA"/>
</dbReference>
<dbReference type="RefSeq" id="NP_926678.1">
    <property type="nucleotide sequence ID" value="NC_005125.1"/>
</dbReference>
<dbReference type="SMR" id="Q7NEZ5"/>
<dbReference type="FunCoup" id="Q7NEZ5">
    <property type="interactions" value="91"/>
</dbReference>
<dbReference type="STRING" id="251221.gene:10761248"/>
<dbReference type="EnsemblBacteria" id="BAC91673">
    <property type="protein sequence ID" value="BAC91673"/>
    <property type="gene ID" value="BAC91673"/>
</dbReference>
<dbReference type="KEGG" id="gvi:gll3732"/>
<dbReference type="PATRIC" id="fig|251221.4.peg.3766"/>
<dbReference type="eggNOG" id="COG0771">
    <property type="taxonomic scope" value="Bacteria"/>
</dbReference>
<dbReference type="HOGENOM" id="CLU_032540_0_0_3"/>
<dbReference type="InParanoid" id="Q7NEZ5"/>
<dbReference type="OrthoDB" id="9809796at2"/>
<dbReference type="PhylomeDB" id="Q7NEZ5"/>
<dbReference type="UniPathway" id="UPA00219"/>
<dbReference type="Proteomes" id="UP000000557">
    <property type="component" value="Chromosome"/>
</dbReference>
<dbReference type="GO" id="GO:0005737">
    <property type="term" value="C:cytoplasm"/>
    <property type="evidence" value="ECO:0007669"/>
    <property type="project" value="UniProtKB-SubCell"/>
</dbReference>
<dbReference type="GO" id="GO:0005524">
    <property type="term" value="F:ATP binding"/>
    <property type="evidence" value="ECO:0007669"/>
    <property type="project" value="UniProtKB-UniRule"/>
</dbReference>
<dbReference type="GO" id="GO:0004326">
    <property type="term" value="F:tetrahydrofolylpolyglutamate synthase activity"/>
    <property type="evidence" value="ECO:0007669"/>
    <property type="project" value="InterPro"/>
</dbReference>
<dbReference type="GO" id="GO:0008764">
    <property type="term" value="F:UDP-N-acetylmuramoylalanine-D-glutamate ligase activity"/>
    <property type="evidence" value="ECO:0007669"/>
    <property type="project" value="UniProtKB-UniRule"/>
</dbReference>
<dbReference type="GO" id="GO:0051301">
    <property type="term" value="P:cell division"/>
    <property type="evidence" value="ECO:0007669"/>
    <property type="project" value="UniProtKB-KW"/>
</dbReference>
<dbReference type="GO" id="GO:0071555">
    <property type="term" value="P:cell wall organization"/>
    <property type="evidence" value="ECO:0007669"/>
    <property type="project" value="UniProtKB-KW"/>
</dbReference>
<dbReference type="GO" id="GO:0009252">
    <property type="term" value="P:peptidoglycan biosynthetic process"/>
    <property type="evidence" value="ECO:0007669"/>
    <property type="project" value="UniProtKB-UniRule"/>
</dbReference>
<dbReference type="GO" id="GO:0008360">
    <property type="term" value="P:regulation of cell shape"/>
    <property type="evidence" value="ECO:0007669"/>
    <property type="project" value="UniProtKB-KW"/>
</dbReference>
<dbReference type="Gene3D" id="3.90.190.20">
    <property type="entry name" value="Mur ligase, C-terminal domain"/>
    <property type="match status" value="1"/>
</dbReference>
<dbReference type="Gene3D" id="3.40.1190.10">
    <property type="entry name" value="Mur-like, catalytic domain"/>
    <property type="match status" value="1"/>
</dbReference>
<dbReference type="Gene3D" id="3.40.50.720">
    <property type="entry name" value="NAD(P)-binding Rossmann-like Domain"/>
    <property type="match status" value="1"/>
</dbReference>
<dbReference type="HAMAP" id="MF_00639">
    <property type="entry name" value="MurD"/>
    <property type="match status" value="1"/>
</dbReference>
<dbReference type="InterPro" id="IPR018109">
    <property type="entry name" value="Folylpolyglutamate_synth_CS"/>
</dbReference>
<dbReference type="InterPro" id="IPR036565">
    <property type="entry name" value="Mur-like_cat_sf"/>
</dbReference>
<dbReference type="InterPro" id="IPR004101">
    <property type="entry name" value="Mur_ligase_C"/>
</dbReference>
<dbReference type="InterPro" id="IPR036615">
    <property type="entry name" value="Mur_ligase_C_dom_sf"/>
</dbReference>
<dbReference type="InterPro" id="IPR013221">
    <property type="entry name" value="Mur_ligase_cen"/>
</dbReference>
<dbReference type="InterPro" id="IPR005762">
    <property type="entry name" value="MurD"/>
</dbReference>
<dbReference type="NCBIfam" id="TIGR01087">
    <property type="entry name" value="murD"/>
    <property type="match status" value="1"/>
</dbReference>
<dbReference type="PANTHER" id="PTHR43692">
    <property type="entry name" value="UDP-N-ACETYLMURAMOYLALANINE--D-GLUTAMATE LIGASE"/>
    <property type="match status" value="1"/>
</dbReference>
<dbReference type="PANTHER" id="PTHR43692:SF1">
    <property type="entry name" value="UDP-N-ACETYLMURAMOYLALANINE--D-GLUTAMATE LIGASE"/>
    <property type="match status" value="1"/>
</dbReference>
<dbReference type="Pfam" id="PF02875">
    <property type="entry name" value="Mur_ligase_C"/>
    <property type="match status" value="1"/>
</dbReference>
<dbReference type="Pfam" id="PF08245">
    <property type="entry name" value="Mur_ligase_M"/>
    <property type="match status" value="1"/>
</dbReference>
<dbReference type="Pfam" id="PF21799">
    <property type="entry name" value="MurD-like_N"/>
    <property type="match status" value="1"/>
</dbReference>
<dbReference type="SUPFAM" id="SSF51984">
    <property type="entry name" value="MurCD N-terminal domain"/>
    <property type="match status" value="1"/>
</dbReference>
<dbReference type="SUPFAM" id="SSF53623">
    <property type="entry name" value="MurD-like peptide ligases, catalytic domain"/>
    <property type="match status" value="1"/>
</dbReference>
<dbReference type="SUPFAM" id="SSF53244">
    <property type="entry name" value="MurD-like peptide ligases, peptide-binding domain"/>
    <property type="match status" value="1"/>
</dbReference>
<gene>
    <name evidence="1" type="primary">murD</name>
    <name type="ordered locus">gll3732</name>
</gene>
<proteinExistence type="inferred from homology"/>
<sequence>MAAVAVVGAGKSGQAAARWLALGGRRVVLWDGRDSEALRVVAGALAPFGVEAVLGREFVPEEPDLSLVVVSPGVRWDHPGLVAARARGVTVTGEVGLAWESLSHRRWLCVTGTNGKTTTTALVGHILKTAGLRAPVCGNIGRPVTDLLLEPEDYDWIVAELSSFQIESAQGIRPEVAVWTTFTPDHLNRHGTLERYAAIKAGLLMQARRAVLNGDDAYLGARRSAWPDAWWTSTQAPAAVSLAGKDICIENRPVLPVSAVRLPGAHNLQNVLMAVAACHLTGVGDAAIASGVASFIGVPHRLEAVGEYRGVRFINDSKATNYDAALVGLTAVPAPSVLIAGGQAKTGESGPWLRAIAERCASVVLIGEAAPLFEKWLRAQDYRAVYTAHTLERAVPMAFEQARAQGAQCVLFSPACASFDQFRNFEERGDRFRALIAALAS</sequence>
<feature type="chain" id="PRO_0000109020" description="UDP-N-acetylmuramoylalanine--D-glutamate ligase">
    <location>
        <begin position="1"/>
        <end position="441"/>
    </location>
</feature>
<feature type="binding site" evidence="1">
    <location>
        <begin position="112"/>
        <end position="118"/>
    </location>
    <ligand>
        <name>ATP</name>
        <dbReference type="ChEBI" id="CHEBI:30616"/>
    </ligand>
</feature>
<protein>
    <recommendedName>
        <fullName evidence="1">UDP-N-acetylmuramoylalanine--D-glutamate ligase</fullName>
        <ecNumber evidence="1">6.3.2.9</ecNumber>
    </recommendedName>
    <alternativeName>
        <fullName evidence="1">D-glutamic acid-adding enzyme</fullName>
    </alternativeName>
    <alternativeName>
        <fullName evidence="1">UDP-N-acetylmuramoyl-L-alanyl-D-glutamate synthetase</fullName>
    </alternativeName>
</protein>
<accession>Q7NEZ5</accession>
<comment type="function">
    <text evidence="1">Cell wall formation. Catalyzes the addition of glutamate to the nucleotide precursor UDP-N-acetylmuramoyl-L-alanine (UMA).</text>
</comment>
<comment type="catalytic activity">
    <reaction evidence="1">
        <text>UDP-N-acetyl-alpha-D-muramoyl-L-alanine + D-glutamate + ATP = UDP-N-acetyl-alpha-D-muramoyl-L-alanyl-D-glutamate + ADP + phosphate + H(+)</text>
        <dbReference type="Rhea" id="RHEA:16429"/>
        <dbReference type="ChEBI" id="CHEBI:15378"/>
        <dbReference type="ChEBI" id="CHEBI:29986"/>
        <dbReference type="ChEBI" id="CHEBI:30616"/>
        <dbReference type="ChEBI" id="CHEBI:43474"/>
        <dbReference type="ChEBI" id="CHEBI:83898"/>
        <dbReference type="ChEBI" id="CHEBI:83900"/>
        <dbReference type="ChEBI" id="CHEBI:456216"/>
        <dbReference type="EC" id="6.3.2.9"/>
    </reaction>
</comment>
<comment type="pathway">
    <text evidence="1">Cell wall biogenesis; peptidoglycan biosynthesis.</text>
</comment>
<comment type="subcellular location">
    <subcellularLocation>
        <location evidence="1">Cytoplasm</location>
    </subcellularLocation>
</comment>
<comment type="similarity">
    <text evidence="1">Belongs to the MurCDEF family.</text>
</comment>